<feature type="chain" id="PRO_0000084327" description="Keratin, high-sulfur matrix protein, B2D">
    <location>
        <begin position="1"/>
        <end position="182"/>
    </location>
</feature>
<feature type="repeat" description="1">
    <location>
        <begin position="27"/>
        <end position="36"/>
    </location>
</feature>
<feature type="repeat" description="2">
    <location>
        <begin position="37"/>
        <end position="46"/>
    </location>
</feature>
<feature type="repeat" description="3">
    <location>
        <begin position="47"/>
        <end position="56"/>
    </location>
</feature>
<feature type="repeat" description="4">
    <location>
        <begin position="57"/>
        <end position="66"/>
    </location>
</feature>
<feature type="repeat" description="5">
    <location>
        <begin position="67"/>
        <end position="76"/>
    </location>
</feature>
<feature type="repeat" description="6">
    <location>
        <begin position="77"/>
        <end position="86"/>
    </location>
</feature>
<feature type="region of interest" description="6 X 10 AA tandem repeats">
    <location>
        <begin position="27"/>
        <end position="86"/>
    </location>
</feature>
<keyword id="KW-0416">Keratin</keyword>
<keyword id="KW-1185">Reference proteome</keyword>
<keyword id="KW-0677">Repeat</keyword>
<accession>P08131</accession>
<sequence length="182" mass="18810">MACCSTSFCGFPTCSTGGTCGSNFCQPTCCQTSCCQPTSIQTSCCQPTSIQTSCCQPTSIQTSCCQPISIQTSCCQPTCLQTSGCETGCGIGGSIGYGQVGSSGAVSSRTKWCRPDCRVEGTSLPPCCVVSCTSPSCCQLYYAQASCCRPSYCGQSCCRPACCCQPTCIEPVCEPTCCEPTC</sequence>
<dbReference type="EMBL" id="X01610">
    <property type="protein sequence ID" value="CAA25759.1"/>
    <property type="molecule type" value="Genomic_DNA"/>
</dbReference>
<dbReference type="PIR" id="S07911">
    <property type="entry name" value="KRSHHD"/>
</dbReference>
<dbReference type="Proteomes" id="UP000002356">
    <property type="component" value="Unplaced"/>
</dbReference>
<dbReference type="GO" id="GO:0005829">
    <property type="term" value="C:cytosol"/>
    <property type="evidence" value="ECO:0007669"/>
    <property type="project" value="UniProtKB-ARBA"/>
</dbReference>
<dbReference type="GO" id="GO:0045095">
    <property type="term" value="C:keratin filament"/>
    <property type="evidence" value="ECO:0007669"/>
    <property type="project" value="InterPro"/>
</dbReference>
<dbReference type="InterPro" id="IPR002494">
    <property type="entry name" value="KAP"/>
</dbReference>
<dbReference type="Pfam" id="PF01500">
    <property type="entry name" value="Keratin_B2"/>
    <property type="match status" value="1"/>
</dbReference>
<reference key="1">
    <citation type="journal article" date="1983" name="Nucleic Acids Res.">
        <title>Mammalian keratin gene families: organisation of genes coding for the B2 high-sulphur proteins of sheep wool.</title>
        <authorList>
            <person name="Powell B.C."/>
            <person name="Sleigh M.J."/>
            <person name="Ward K.A."/>
            <person name="Rogers G.E."/>
        </authorList>
    </citation>
    <scope>NUCLEOTIDE SEQUENCE [GENOMIC DNA]</scope>
</reference>
<protein>
    <recommendedName>
        <fullName>Keratin, high-sulfur matrix protein, B2D</fullName>
    </recommendedName>
</protein>
<comment type="function">
    <text>The keratin products of mammalian epidermal derivatives such as wool and hair consist of microfibrils embedded in a rigid matrix of other proteins. The matrix proteins include the high-sulfur and high-tyrosine keratins, having molecular weights of 6-20 kDa, whereas the microfibrils contain the larger, low-sulfur keratins (40-56 kDa).</text>
</comment>
<proteinExistence type="predicted"/>
<organism>
    <name type="scientific">Ovis aries</name>
    <name type="common">Sheep</name>
    <dbReference type="NCBI Taxonomy" id="9940"/>
    <lineage>
        <taxon>Eukaryota</taxon>
        <taxon>Metazoa</taxon>
        <taxon>Chordata</taxon>
        <taxon>Craniata</taxon>
        <taxon>Vertebrata</taxon>
        <taxon>Euteleostomi</taxon>
        <taxon>Mammalia</taxon>
        <taxon>Eutheria</taxon>
        <taxon>Laurasiatheria</taxon>
        <taxon>Artiodactyla</taxon>
        <taxon>Ruminantia</taxon>
        <taxon>Pecora</taxon>
        <taxon>Bovidae</taxon>
        <taxon>Caprinae</taxon>
        <taxon>Ovis</taxon>
    </lineage>
</organism>
<name>KRB2D_SHEEP</name>